<protein>
    <recommendedName>
        <fullName evidence="12">Protein tudor</fullName>
    </recommendedName>
</protein>
<sequence>MNGQARIALPSKVDLYITHVDHVGPYLKVYGHVNRDAASLISERIRNLLPTCFAIEPSWSVERQQALLIPGTFCIFKNINGPAPGDVEYRRIRVVSADLEGQSMRAEIDFVDFGYKRTVDSHDLMFPKQPKLLQNIPLHCFQYIVLGICSEWDQTDLAEVRRLVVNQIVKITVEPTQICDQKFASLRWKDFELNEFLVQQKQIGVSVDKQLMMDHCKKLWKDNPQSPVTEYNNNSIHNSKTPMEIAREQLAVRQSLAARLDAQRSVQVTPSRPLNADAPDYTPKHLPLVNVTNVQVQMPGLNNTQKPVFVSTNPYNRANYQPAVPAAQPYVPKANPRSQYTYYNVRMNKPINAMPPPAGPHVPIQHFNQQANNVSLSYVPARFTPPPTPSIAQHQIPIPAFRTTSLTVGLTYDVVISYVENGPYLFWVHLKSSDHDLSTMMGQIERTKLKALAQAPELGTACVARFSEDGHLYRAMVCAVYAQRYRVVYVDYGNSELLSASDLFQIPPELLEIKPFAFRFALAGTKEIEPIDDSMKRIFKKSAIYRNFELTVQAPESVGSMQTCHLNQNGTNMLELLRQLKNSRQSYKKAEQLENDDAVEIRFIDSPSNFYVQKVANIGKFEQLMDEMFSYYNANQRVPDQLILGAPCIVKCDQEWYRAEILRVDDSVIVRHVDFGYEQNVKRHLIGHIAEKHLEMPRQAIKCCLKGFENSELSEDKITDQFEMLAEESNIRRRTFSVRIFRIEPDGLNVVNLLAKNLNVMKKLYKLSMPFEQYLSLEKGQFNANNTRAESVISSELNKSHILNSTSIGETENRLQEQEKEQQQKKVDVRQQQLAVEIPQAVKSVSGSKNSTDWDKRSSTSAGSKDSKRQQQQQIQRIDRHLDFSCETQSTGSYSSGMSSPRKGNRQQNGRTPIQSPRHNEKQEAKKNARFSNSESPRRSRDGQQGNQRSQNAPQGYAQKPQRQKSTLDGNISSKRSSGVGSDIASSSSESVAAAKPEKYVSLDKPYALQEMKTPSKEAASLSWWLSPFQFYIVPKSVSAKYDNIMRDMREFYRQKQHQPLQLKVGSTVVVRQRKDNAILRATVTACNHMMRKYRVFCVDTGSLITVTSEDIWQLEQRFADPPCMAHRCSFHSVVTNYDPLYIVDRMETFVPVNAKVDCEFVSKEKSNQGSNTSSTCSYTVNIFVNGASLRDMLVKAEFLTEVAPEIRVNLLAGQQIRGKFTSIRDMTSFKVQFDYGNNVNFLCTYDDAKFVKSNPNLARRFKEFYEGKSFALNVKNVCENNIVHLRPVMPLFMEDRRSFICPYPVVLSSFQALVVYTAKPYRVYVQPQAIVPSMQTLLDNMYEHYKAKGDSLKKFDVGQICAVRSSDGNWYRARISGKDSNAACFEVFYIDYGNTEEIKRDDIKALDAKFYEHASGFAVEINLPIGRPSNDTKLKARISEILEEKVVTIKSIEVRRSHLIADVILENNQSVIDLLKAEKLVPGKDLDYMRKQMEKGKSRTYEYIETVDLTLDEEEDKGRKETVSKSGSANASPKKKQHNDKDREPKKSKPAEPARTVAPQPVALKTPSPVPAEPAPVPKPATPVPEVVEVPEINPTVREAAAESKQAPAQEDPYKDLDCVVLSHCDNPAQFYVHPIDQLSKLNQLHENLQIVSPSLPQLMNVVNGADCVSMYSVDKCWYRAKIIDAELMVLLFIDYGNTDCVSDATDIKESMWSHIEPFCLPCALPIRPKGTADWVDAANGIFNESYSKVPRLEYLTQGDHYTTSYVNMYIDGEDVAKKLIADGFARPLEYLASGCSCYISHVNGICDFFIQLERDSKALELIELYLRKKDTLKPLEGFEKGLIVAALFEDDELWYRAQLQKELPDSRYEVLFIDYGNTSTTSKCLMLSEEIASLPSLSKKCSLQLPDAYISWSPEAEAKFAELTGEGELVFTTQLLKPGQDHVTIDLLLDGENIIDRLLPLCQRKEPKEASKESLAVTTKAIITHVENTSRIYLQFSEKDSLMDIICEKLNGSKLQPKTEKAAVDDMCVVQFADDLEFYRSRILEVLEDDQYKVILIDYGNTTVVDKLYELPQEFTLIKPVAEICSMEPSAIFEKNKALTLTTFDALLDSCKGVVAVEFVNKSASPPVVRLTTKDKRSLKIYEHLQKLVQAELKLIQKRNENSECIISYGNSPKSFYVQMKHNSADLDLIVKTLQSLKKEKLKKLIDPTTNSNGVCYSQEDACYYRCSIKSVLDPSQGFEVFLLDYGNTLVVPEVWQLPQEIEPIPSLALHCQLSKIPMDVSDEKLEEAFAALLEQHFGELYEITTQPNEDETKPLIAELRINYKDFVQELVSTVTGVQKPLEAELHNCVVVQFDGPMSFYVQMESDVPALEQMTDKLLDAEQDLPAFSDLKEGALCVAQFPEDEVFYRAQIRKVLDDGKCEVHFIDFGNNAVTQQFRQLPEELAKPARYSRHCELDASTISKCDAALLQSFIDTRFSETFQVEILATKGTGTHVVRLFYQSKNISEKLQECQ</sequence>
<proteinExistence type="evidence at protein level"/>
<name>TUD_DROME</name>
<organism evidence="13">
    <name type="scientific">Drosophila melanogaster</name>
    <name type="common">Fruit fly</name>
    <dbReference type="NCBI Taxonomy" id="7227"/>
    <lineage>
        <taxon>Eukaryota</taxon>
        <taxon>Metazoa</taxon>
        <taxon>Ecdysozoa</taxon>
        <taxon>Arthropoda</taxon>
        <taxon>Hexapoda</taxon>
        <taxon>Insecta</taxon>
        <taxon>Pterygota</taxon>
        <taxon>Neoptera</taxon>
        <taxon>Endopterygota</taxon>
        <taxon>Diptera</taxon>
        <taxon>Brachycera</taxon>
        <taxon>Muscomorpha</taxon>
        <taxon>Ephydroidea</taxon>
        <taxon>Drosophilidae</taxon>
        <taxon>Drosophila</taxon>
        <taxon>Sophophora</taxon>
    </lineage>
</organism>
<feature type="chain" id="PRO_0000183160" description="Protein tudor">
    <location>
        <begin position="1"/>
        <end position="2515"/>
    </location>
</feature>
<feature type="domain" description="Tudor 1" evidence="1">
    <location>
        <begin position="455"/>
        <end position="513"/>
    </location>
</feature>
<feature type="domain" description="Tudor 2" evidence="1">
    <location>
        <begin position="641"/>
        <end position="696"/>
    </location>
</feature>
<feature type="domain" description="Tudor 3" evidence="1">
    <location>
        <begin position="1062"/>
        <end position="1122"/>
    </location>
</feature>
<feature type="domain" description="Tudor 4" evidence="1">
    <location>
        <begin position="1355"/>
        <end position="1414"/>
    </location>
</feature>
<feature type="domain" description="Tudor 5" evidence="1">
    <location>
        <begin position="1662"/>
        <end position="1718"/>
    </location>
</feature>
<feature type="domain" description="Tudor 6" evidence="1">
    <location>
        <begin position="1839"/>
        <end position="1898"/>
    </location>
</feature>
<feature type="domain" description="Tudor 7" evidence="1">
    <location>
        <begin position="2023"/>
        <end position="2082"/>
    </location>
</feature>
<feature type="domain" description="Tudor 8" evidence="1">
    <location>
        <begin position="2211"/>
        <end position="2269"/>
    </location>
</feature>
<feature type="domain" description="Tudor 9" evidence="1">
    <location>
        <begin position="2392"/>
        <end position="2451"/>
    </location>
</feature>
<feature type="region of interest" description="Disordered" evidence="2">
    <location>
        <begin position="840"/>
        <end position="996"/>
    </location>
</feature>
<feature type="region of interest" description="Disordered" evidence="2">
    <location>
        <begin position="1515"/>
        <end position="1589"/>
    </location>
</feature>
<feature type="compositionally biased region" description="Low complexity" evidence="2">
    <location>
        <begin position="890"/>
        <end position="900"/>
    </location>
</feature>
<feature type="compositionally biased region" description="Polar residues" evidence="2">
    <location>
        <begin position="906"/>
        <end position="917"/>
    </location>
</feature>
<feature type="compositionally biased region" description="Basic and acidic residues" evidence="2">
    <location>
        <begin position="918"/>
        <end position="927"/>
    </location>
</feature>
<feature type="compositionally biased region" description="Polar residues" evidence="2">
    <location>
        <begin position="943"/>
        <end position="954"/>
    </location>
</feature>
<feature type="compositionally biased region" description="Polar residues" evidence="2">
    <location>
        <begin position="964"/>
        <end position="976"/>
    </location>
</feature>
<feature type="compositionally biased region" description="Low complexity" evidence="2">
    <location>
        <begin position="977"/>
        <end position="995"/>
    </location>
</feature>
<feature type="compositionally biased region" description="Basic and acidic residues" evidence="2">
    <location>
        <begin position="1540"/>
        <end position="1553"/>
    </location>
</feature>
<feature type="compositionally biased region" description="Pro residues" evidence="2">
    <location>
        <begin position="1569"/>
        <end position="1584"/>
    </location>
</feature>
<feature type="modified residue" description="Phosphoserine" evidence="5">
    <location>
        <position position="226"/>
    </location>
</feature>
<feature type="modified residue" description="Phosphoserine" evidence="5">
    <location>
        <position position="235"/>
    </location>
</feature>
<feature type="modified residue" description="Phosphoserine" evidence="5">
    <location>
        <position position="239"/>
    </location>
</feature>
<feature type="modified residue" description="Phosphoserine" evidence="5">
    <location>
        <position position="800"/>
    </location>
</feature>
<feature type="sequence conflict" description="In Ref. 1; CAA44286." evidence="11" ref="1">
    <original>K</original>
    <variation>N</variation>
    <location>
        <position position="116"/>
    </location>
</feature>
<feature type="sequence conflict" description="In Ref. 1; CAA44286." evidence="11" ref="1">
    <original>NQRV</original>
    <variation>TREF</variation>
    <location>
        <begin position="635"/>
        <end position="638"/>
    </location>
</feature>
<feature type="sequence conflict" description="In Ref. 1; CAA44286." evidence="11" ref="1">
    <original>Y</original>
    <variation>I</variation>
    <location>
        <position position="1763"/>
    </location>
</feature>
<feature type="strand" evidence="15">
    <location>
        <begin position="1982"/>
        <end position="1990"/>
    </location>
</feature>
<feature type="strand" evidence="15">
    <location>
        <begin position="1993"/>
        <end position="1998"/>
    </location>
</feature>
<feature type="helix" evidence="15">
    <location>
        <begin position="1999"/>
        <end position="2001"/>
    </location>
</feature>
<feature type="helix" evidence="15">
    <location>
        <begin position="2002"/>
        <end position="2014"/>
    </location>
</feature>
<feature type="strand" evidence="15">
    <location>
        <begin position="2029"/>
        <end position="2033"/>
    </location>
</feature>
<feature type="turn" evidence="15">
    <location>
        <begin position="2035"/>
        <end position="2037"/>
    </location>
</feature>
<feature type="strand" evidence="15">
    <location>
        <begin position="2040"/>
        <end position="2048"/>
    </location>
</feature>
<feature type="strand" evidence="15">
    <location>
        <begin position="2054"/>
        <end position="2058"/>
    </location>
</feature>
<feature type="turn" evidence="15">
    <location>
        <begin position="2059"/>
        <end position="2061"/>
    </location>
</feature>
<feature type="strand" evidence="15">
    <location>
        <begin position="2064"/>
        <end position="2068"/>
    </location>
</feature>
<feature type="helix" evidence="15">
    <location>
        <begin position="2075"/>
        <end position="2077"/>
    </location>
</feature>
<feature type="strand" evidence="15">
    <location>
        <begin position="2085"/>
        <end position="2089"/>
    </location>
</feature>
<feature type="helix" evidence="15">
    <location>
        <begin position="2093"/>
        <end position="2097"/>
    </location>
</feature>
<feature type="helix" evidence="15">
    <location>
        <begin position="2099"/>
        <end position="2111"/>
    </location>
</feature>
<feature type="turn" evidence="15">
    <location>
        <begin position="2112"/>
        <end position="2115"/>
    </location>
</feature>
<feature type="strand" evidence="15">
    <location>
        <begin position="2116"/>
        <end position="2123"/>
    </location>
</feature>
<feature type="strand" evidence="15">
    <location>
        <begin position="2126"/>
        <end position="2128"/>
    </location>
</feature>
<feature type="strand" evidence="15">
    <location>
        <begin position="2130"/>
        <end position="2137"/>
    </location>
</feature>
<feature type="helix" evidence="15">
    <location>
        <begin position="2143"/>
        <end position="2159"/>
    </location>
</feature>
<feature type="strand" evidence="16">
    <location>
        <begin position="2164"/>
        <end position="2174"/>
    </location>
</feature>
<feature type="strand" evidence="16">
    <location>
        <begin position="2177"/>
        <end position="2182"/>
    </location>
</feature>
<feature type="helix" evidence="16">
    <location>
        <begin position="2183"/>
        <end position="2185"/>
    </location>
</feature>
<feature type="helix" evidence="16">
    <location>
        <begin position="2186"/>
        <end position="2194"/>
    </location>
</feature>
<feature type="strand" evidence="16">
    <location>
        <begin position="2217"/>
        <end position="2220"/>
    </location>
</feature>
<feature type="turn" evidence="16">
    <location>
        <begin position="2221"/>
        <end position="2224"/>
    </location>
</feature>
<feature type="strand" evidence="16">
    <location>
        <begin position="2225"/>
        <end position="2228"/>
    </location>
</feature>
<feature type="strand" evidence="16">
    <location>
        <begin position="2231"/>
        <end position="2234"/>
    </location>
</feature>
<feature type="strand" evidence="16">
    <location>
        <begin position="2241"/>
        <end position="2244"/>
    </location>
</feature>
<feature type="turn" evidence="16">
    <location>
        <begin position="2246"/>
        <end position="2248"/>
    </location>
</feature>
<feature type="strand" evidence="16">
    <location>
        <begin position="2251"/>
        <end position="2255"/>
    </location>
</feature>
<feature type="turn" evidence="16">
    <location>
        <begin position="2262"/>
        <end position="2266"/>
    </location>
</feature>
<feature type="strand" evidence="16">
    <location>
        <begin position="2272"/>
        <end position="2277"/>
    </location>
</feature>
<feature type="helix" evidence="16">
    <location>
        <begin position="2285"/>
        <end position="2297"/>
    </location>
</feature>
<feature type="strand" evidence="16">
    <location>
        <begin position="2304"/>
        <end position="2309"/>
    </location>
</feature>
<feature type="strand" evidence="16">
    <location>
        <begin position="2318"/>
        <end position="2324"/>
    </location>
</feature>
<feature type="helix" evidence="16">
    <location>
        <begin position="2329"/>
        <end position="2337"/>
    </location>
</feature>
<feature type="helix" evidence="16">
    <location>
        <begin position="2344"/>
        <end position="2347"/>
    </location>
</feature>
<feature type="strand" evidence="14">
    <location>
        <begin position="2349"/>
        <end position="2358"/>
    </location>
</feature>
<feature type="strand" evidence="14">
    <location>
        <begin position="2361"/>
        <end position="2366"/>
    </location>
</feature>
<feature type="helix" evidence="14">
    <location>
        <begin position="2367"/>
        <end position="2369"/>
    </location>
</feature>
<feature type="helix" evidence="14">
    <location>
        <begin position="2370"/>
        <end position="2383"/>
    </location>
</feature>
<feature type="helix" evidence="14">
    <location>
        <begin position="2384"/>
        <end position="2386"/>
    </location>
</feature>
<feature type="strand" evidence="14">
    <location>
        <begin position="2398"/>
        <end position="2402"/>
    </location>
</feature>
<feature type="turn" evidence="14">
    <location>
        <begin position="2404"/>
        <end position="2406"/>
    </location>
</feature>
<feature type="strand" evidence="14">
    <location>
        <begin position="2409"/>
        <end position="2417"/>
    </location>
</feature>
<feature type="strand" evidence="16">
    <location>
        <begin position="2419"/>
        <end position="2421"/>
    </location>
</feature>
<feature type="strand" evidence="14">
    <location>
        <begin position="2423"/>
        <end position="2426"/>
    </location>
</feature>
<feature type="turn" evidence="14">
    <location>
        <begin position="2428"/>
        <end position="2430"/>
    </location>
</feature>
<feature type="strand" evidence="14">
    <location>
        <begin position="2433"/>
        <end position="2437"/>
    </location>
</feature>
<feature type="helix" evidence="14">
    <location>
        <begin position="2444"/>
        <end position="2447"/>
    </location>
</feature>
<feature type="strand" evidence="14">
    <location>
        <begin position="2452"/>
        <end position="2458"/>
    </location>
</feature>
<feature type="helix" evidence="14">
    <location>
        <begin position="2460"/>
        <end position="2462"/>
    </location>
</feature>
<feature type="helix" evidence="14">
    <location>
        <begin position="2465"/>
        <end position="2476"/>
    </location>
</feature>
<feature type="turn" evidence="14">
    <location>
        <begin position="2477"/>
        <end position="2480"/>
    </location>
</feature>
<feature type="strand" evidence="14">
    <location>
        <begin position="2481"/>
        <end position="2490"/>
    </location>
</feature>
<feature type="strand" evidence="16">
    <location>
        <begin position="2492"/>
        <end position="2494"/>
    </location>
</feature>
<feature type="strand" evidence="14">
    <location>
        <begin position="2496"/>
        <end position="2502"/>
    </location>
</feature>
<feature type="helix" evidence="14">
    <location>
        <begin position="2507"/>
        <end position="2510"/>
    </location>
</feature>
<feature type="turn" evidence="16">
    <location>
        <begin position="2512"/>
        <end position="2514"/>
    </location>
</feature>
<evidence type="ECO:0000255" key="1">
    <source>
        <dbReference type="PROSITE-ProRule" id="PRU00211"/>
    </source>
</evidence>
<evidence type="ECO:0000256" key="2">
    <source>
        <dbReference type="SAM" id="MobiDB-lite"/>
    </source>
</evidence>
<evidence type="ECO:0000269" key="3">
    <source>
    </source>
</evidence>
<evidence type="ECO:0000269" key="4">
    <source>
    </source>
</evidence>
<evidence type="ECO:0000269" key="5">
    <source>
    </source>
</evidence>
<evidence type="ECO:0000269" key="6">
    <source>
    </source>
</evidence>
<evidence type="ECO:0000269" key="7">
    <source>
    </source>
</evidence>
<evidence type="ECO:0000269" key="8">
    <source>
    </source>
</evidence>
<evidence type="ECO:0000269" key="9">
    <source>
    </source>
</evidence>
<evidence type="ECO:0000269" key="10">
    <source>
    </source>
</evidence>
<evidence type="ECO:0000305" key="11"/>
<evidence type="ECO:0000312" key="12">
    <source>
        <dbReference type="FlyBase" id="FBgn0003891"/>
    </source>
</evidence>
<evidence type="ECO:0000312" key="13">
    <source>
        <dbReference type="Proteomes" id="UP000000803"/>
    </source>
</evidence>
<evidence type="ECO:0007829" key="14">
    <source>
        <dbReference type="PDB" id="3NTK"/>
    </source>
</evidence>
<evidence type="ECO:0007829" key="15">
    <source>
        <dbReference type="PDB" id="4Q5W"/>
    </source>
</evidence>
<evidence type="ECO:0007829" key="16">
    <source>
        <dbReference type="PDB" id="4Q5Y"/>
    </source>
</evidence>
<reference key="1">
    <citation type="journal article" date="1991" name="Genes Dev.">
        <title>Tudor, a posterior-group gene of Drosophila melanogaster, encodes a novel protein and an mRNA localized during mid-oogenesis.</title>
        <authorList>
            <person name="Golumbeski G.S."/>
            <person name="Bardsley A."/>
            <person name="Tax F."/>
            <person name="Boswell R.E."/>
        </authorList>
    </citation>
    <scope>NUCLEOTIDE SEQUENCE [MRNA]</scope>
</reference>
<reference key="2">
    <citation type="journal article" date="2000" name="Science">
        <title>The genome sequence of Drosophila melanogaster.</title>
        <authorList>
            <person name="Adams M.D."/>
            <person name="Celniker S.E."/>
            <person name="Holt R.A."/>
            <person name="Evans C.A."/>
            <person name="Gocayne J.D."/>
            <person name="Amanatides P.G."/>
            <person name="Scherer S.E."/>
            <person name="Li P.W."/>
            <person name="Hoskins R.A."/>
            <person name="Galle R.F."/>
            <person name="George R.A."/>
            <person name="Lewis S.E."/>
            <person name="Richards S."/>
            <person name="Ashburner M."/>
            <person name="Henderson S.N."/>
            <person name="Sutton G.G."/>
            <person name="Wortman J.R."/>
            <person name="Yandell M.D."/>
            <person name="Zhang Q."/>
            <person name="Chen L.X."/>
            <person name="Brandon R.C."/>
            <person name="Rogers Y.-H.C."/>
            <person name="Blazej R.G."/>
            <person name="Champe M."/>
            <person name="Pfeiffer B.D."/>
            <person name="Wan K.H."/>
            <person name="Doyle C."/>
            <person name="Baxter E.G."/>
            <person name="Helt G."/>
            <person name="Nelson C.R."/>
            <person name="Miklos G.L.G."/>
            <person name="Abril J.F."/>
            <person name="Agbayani A."/>
            <person name="An H.-J."/>
            <person name="Andrews-Pfannkoch C."/>
            <person name="Baldwin D."/>
            <person name="Ballew R.M."/>
            <person name="Basu A."/>
            <person name="Baxendale J."/>
            <person name="Bayraktaroglu L."/>
            <person name="Beasley E.M."/>
            <person name="Beeson K.Y."/>
            <person name="Benos P.V."/>
            <person name="Berman B.P."/>
            <person name="Bhandari D."/>
            <person name="Bolshakov S."/>
            <person name="Borkova D."/>
            <person name="Botchan M.R."/>
            <person name="Bouck J."/>
            <person name="Brokstein P."/>
            <person name="Brottier P."/>
            <person name="Burtis K.C."/>
            <person name="Busam D.A."/>
            <person name="Butler H."/>
            <person name="Cadieu E."/>
            <person name="Center A."/>
            <person name="Chandra I."/>
            <person name="Cherry J.M."/>
            <person name="Cawley S."/>
            <person name="Dahlke C."/>
            <person name="Davenport L.B."/>
            <person name="Davies P."/>
            <person name="de Pablos B."/>
            <person name="Delcher A."/>
            <person name="Deng Z."/>
            <person name="Mays A.D."/>
            <person name="Dew I."/>
            <person name="Dietz S.M."/>
            <person name="Dodson K."/>
            <person name="Doup L.E."/>
            <person name="Downes M."/>
            <person name="Dugan-Rocha S."/>
            <person name="Dunkov B.C."/>
            <person name="Dunn P."/>
            <person name="Durbin K.J."/>
            <person name="Evangelista C.C."/>
            <person name="Ferraz C."/>
            <person name="Ferriera S."/>
            <person name="Fleischmann W."/>
            <person name="Fosler C."/>
            <person name="Gabrielian A.E."/>
            <person name="Garg N.S."/>
            <person name="Gelbart W.M."/>
            <person name="Glasser K."/>
            <person name="Glodek A."/>
            <person name="Gong F."/>
            <person name="Gorrell J.H."/>
            <person name="Gu Z."/>
            <person name="Guan P."/>
            <person name="Harris M."/>
            <person name="Harris N.L."/>
            <person name="Harvey D.A."/>
            <person name="Heiman T.J."/>
            <person name="Hernandez J.R."/>
            <person name="Houck J."/>
            <person name="Hostin D."/>
            <person name="Houston K.A."/>
            <person name="Howland T.J."/>
            <person name="Wei M.-H."/>
            <person name="Ibegwam C."/>
            <person name="Jalali M."/>
            <person name="Kalush F."/>
            <person name="Karpen G.H."/>
            <person name="Ke Z."/>
            <person name="Kennison J.A."/>
            <person name="Ketchum K.A."/>
            <person name="Kimmel B.E."/>
            <person name="Kodira C.D."/>
            <person name="Kraft C.L."/>
            <person name="Kravitz S."/>
            <person name="Kulp D."/>
            <person name="Lai Z."/>
            <person name="Lasko P."/>
            <person name="Lei Y."/>
            <person name="Levitsky A.A."/>
            <person name="Li J.H."/>
            <person name="Li Z."/>
            <person name="Liang Y."/>
            <person name="Lin X."/>
            <person name="Liu X."/>
            <person name="Mattei B."/>
            <person name="McIntosh T.C."/>
            <person name="McLeod M.P."/>
            <person name="McPherson D."/>
            <person name="Merkulov G."/>
            <person name="Milshina N.V."/>
            <person name="Mobarry C."/>
            <person name="Morris J."/>
            <person name="Moshrefi A."/>
            <person name="Mount S.M."/>
            <person name="Moy M."/>
            <person name="Murphy B."/>
            <person name="Murphy L."/>
            <person name="Muzny D.M."/>
            <person name="Nelson D.L."/>
            <person name="Nelson D.R."/>
            <person name="Nelson K.A."/>
            <person name="Nixon K."/>
            <person name="Nusskern D.R."/>
            <person name="Pacleb J.M."/>
            <person name="Palazzolo M."/>
            <person name="Pittman G.S."/>
            <person name="Pan S."/>
            <person name="Pollard J."/>
            <person name="Puri V."/>
            <person name="Reese M.G."/>
            <person name="Reinert K."/>
            <person name="Remington K."/>
            <person name="Saunders R.D.C."/>
            <person name="Scheeler F."/>
            <person name="Shen H."/>
            <person name="Shue B.C."/>
            <person name="Siden-Kiamos I."/>
            <person name="Simpson M."/>
            <person name="Skupski M.P."/>
            <person name="Smith T.J."/>
            <person name="Spier E."/>
            <person name="Spradling A.C."/>
            <person name="Stapleton M."/>
            <person name="Strong R."/>
            <person name="Sun E."/>
            <person name="Svirskas R."/>
            <person name="Tector C."/>
            <person name="Turner R."/>
            <person name="Venter E."/>
            <person name="Wang A.H."/>
            <person name="Wang X."/>
            <person name="Wang Z.-Y."/>
            <person name="Wassarman D.A."/>
            <person name="Weinstock G.M."/>
            <person name="Weissenbach J."/>
            <person name="Williams S.M."/>
            <person name="Woodage T."/>
            <person name="Worley K.C."/>
            <person name="Wu D."/>
            <person name="Yang S."/>
            <person name="Yao Q.A."/>
            <person name="Ye J."/>
            <person name="Yeh R.-F."/>
            <person name="Zaveri J.S."/>
            <person name="Zhan M."/>
            <person name="Zhang G."/>
            <person name="Zhao Q."/>
            <person name="Zheng L."/>
            <person name="Zheng X.H."/>
            <person name="Zhong F.N."/>
            <person name="Zhong W."/>
            <person name="Zhou X."/>
            <person name="Zhu S.C."/>
            <person name="Zhu X."/>
            <person name="Smith H.O."/>
            <person name="Gibbs R.A."/>
            <person name="Myers E.W."/>
            <person name="Rubin G.M."/>
            <person name="Venter J.C."/>
        </authorList>
    </citation>
    <scope>NUCLEOTIDE SEQUENCE [LARGE SCALE GENOMIC DNA]</scope>
    <source>
        <strain>Berkeley</strain>
    </source>
</reference>
<reference key="3">
    <citation type="journal article" date="2002" name="Genome Biol.">
        <title>Annotation of the Drosophila melanogaster euchromatic genome: a systematic review.</title>
        <authorList>
            <person name="Misra S."/>
            <person name="Crosby M.A."/>
            <person name="Mungall C.J."/>
            <person name="Matthews B.B."/>
            <person name="Campbell K.S."/>
            <person name="Hradecky P."/>
            <person name="Huang Y."/>
            <person name="Kaminker J.S."/>
            <person name="Millburn G.H."/>
            <person name="Prochnik S.E."/>
            <person name="Smith C.D."/>
            <person name="Tupy J.L."/>
            <person name="Whitfield E.J."/>
            <person name="Bayraktaroglu L."/>
            <person name="Berman B.P."/>
            <person name="Bettencourt B.R."/>
            <person name="Celniker S.E."/>
            <person name="de Grey A.D.N.J."/>
            <person name="Drysdale R.A."/>
            <person name="Harris N.L."/>
            <person name="Richter J."/>
            <person name="Russo S."/>
            <person name="Schroeder A.J."/>
            <person name="Shu S.Q."/>
            <person name="Stapleton M."/>
            <person name="Yamada C."/>
            <person name="Ashburner M."/>
            <person name="Gelbart W.M."/>
            <person name="Rubin G.M."/>
            <person name="Lewis S.E."/>
        </authorList>
    </citation>
    <scope>GENOME REANNOTATION</scope>
    <source>
        <strain>Berkeley</strain>
    </source>
</reference>
<reference key="4">
    <citation type="journal article" date="2007" name="Proc. Natl. Acad. Sci. U.S.A.">
        <title>Unique germ-line organelle, nuage, functions to repress selfish genetic elements in Drosophila melanogaster.</title>
        <authorList>
            <person name="Lim A.K."/>
            <person name="Kai T."/>
        </authorList>
    </citation>
    <scope>FUNCTION</scope>
</reference>
<reference key="5">
    <citation type="journal article" date="2007" name="Proc. Natl. Acad. Sci. U.S.A.">
        <authorList>
            <person name="Lim A.K."/>
            <person name="Kai T."/>
        </authorList>
    </citation>
    <scope>ERRATUM OF PUBMED:17428915</scope>
</reference>
<reference key="6">
    <citation type="journal article" date="2005" name="Development">
        <title>Valois, a component of the nuage and pole plasm, is involved in assembly of these structures, and binds to Tudor and the methyltransferase Capsuleen.</title>
        <authorList>
            <person name="Anne J."/>
            <person name="Mechler B.M."/>
        </authorList>
    </citation>
    <scope>INTERACTION WITH VLS</scope>
</reference>
<reference key="7">
    <citation type="journal article" date="2008" name="J. Proteome Res.">
        <title>Phosphoproteome analysis of Drosophila melanogaster embryos.</title>
        <authorList>
            <person name="Zhai B."/>
            <person name="Villen J."/>
            <person name="Beausoleil S.A."/>
            <person name="Mintseris J."/>
            <person name="Gygi S.P."/>
        </authorList>
    </citation>
    <scope>PHOSPHORYLATION [LARGE SCALE ANALYSIS] AT SER-226; SER-235; SER-239 AND SER-800</scope>
    <scope>IDENTIFICATION BY MASS SPECTROMETRY</scope>
    <source>
        <tissue>Embryo</tissue>
    </source>
</reference>
<reference key="8">
    <citation type="journal article" date="2009" name="EMBO J.">
        <title>Functional involvement of Tudor and dPRMT5 in the piRNA processing pathway in Drosophila germlines.</title>
        <authorList>
            <person name="Nishida K.M."/>
            <person name="Okada T.N."/>
            <person name="Kawamura T."/>
            <person name="Mituyama T."/>
            <person name="Kawamura Y."/>
            <person name="Inagaki S."/>
            <person name="Huang H."/>
            <person name="Chen D."/>
            <person name="Kodama T."/>
            <person name="Siomi H."/>
            <person name="Siomi M.C."/>
        </authorList>
    </citation>
    <scope>FUNCTION</scope>
    <scope>INTERACTION WITH AGO3 AND AUB</scope>
    <scope>IDENTIFICATION BY MASS SPECTROMETRY</scope>
</reference>
<reference key="9">
    <citation type="journal article" date="2011" name="Front. Genet.">
        <title>Gender-Specific Hierarchy in Nuage Localization of PIWI-Interacting RNA Factors in Drosophila.</title>
        <authorList>
            <person name="Nagao A."/>
            <person name="Sato K."/>
            <person name="Nishida K.M."/>
            <person name="Siomi H."/>
            <person name="Siomi M.C."/>
        </authorList>
    </citation>
    <scope>SUBCELLULAR LOCATION</scope>
    <scope>DEVELOPMENTAL STAGE</scope>
</reference>
<reference key="10">
    <citation type="journal article" date="2015" name="Mol. Cell">
        <title>Krimper Enforces an Antisense Bias on piRNA Pools by Binding AGO3 in the Drosophila Germline.</title>
        <authorList>
            <person name="Sato K."/>
            <person name="Iwasaki Y.W."/>
            <person name="Shibuya A."/>
            <person name="Carninci P."/>
            <person name="Tsuchizawa Y."/>
            <person name="Ishizu H."/>
            <person name="Siomi M.C."/>
            <person name="Siomi H."/>
        </authorList>
    </citation>
    <scope>INTERACTION WITH AGO3</scope>
</reference>
<reference key="11">
    <citation type="journal article" date="2015" name="Mol. Cell">
        <title>Aub and Ago3 Are Recruited to Nuage through Two Mechanisms to Form a Ping-Pong Complex Assembled by Krimper.</title>
        <authorList>
            <person name="Webster A."/>
            <person name="Li S."/>
            <person name="Hur J.K."/>
            <person name="Wachsmuth M."/>
            <person name="Bois J.S."/>
            <person name="Perkins E.M."/>
            <person name="Patel D.J."/>
            <person name="Aravin A.A."/>
        </authorList>
    </citation>
    <scope>SUBCELLULAR LOCATION</scope>
</reference>
<reference key="12">
    <citation type="journal article" date="2017" name="FEBS Lett.">
        <title>An in vivo proteomic analysis of the Me31B interactome in Drosophila germ granules.</title>
        <authorList>
            <person name="DeHaan H."/>
            <person name="McCambridge A."/>
            <person name="Armstrong B."/>
            <person name="Cruse C."/>
            <person name="Solanki D."/>
            <person name="Trinidad J.C."/>
            <person name="Arkov A.L."/>
            <person name="Gao M."/>
        </authorList>
    </citation>
    <scope>INTERACTION WITH ME31B</scope>
    <scope>SUBCELLULAR LOCATION</scope>
</reference>
<dbReference type="EMBL" id="X62420">
    <property type="protein sequence ID" value="CAA44286.1"/>
    <property type="molecule type" value="mRNA"/>
</dbReference>
<dbReference type="EMBL" id="AE013599">
    <property type="protein sequence ID" value="AAF46693.1"/>
    <property type="molecule type" value="Genomic_DNA"/>
</dbReference>
<dbReference type="PIR" id="A41519">
    <property type="entry name" value="A41519"/>
</dbReference>
<dbReference type="RefSeq" id="NP_476773.1">
    <property type="nucleotide sequence ID" value="NM_057425.3"/>
</dbReference>
<dbReference type="PDB" id="3NTH">
    <property type="method" value="X-ray"/>
    <property type="resolution" value="2.80 A"/>
    <property type="chains" value="A=2344-2515"/>
</dbReference>
<dbReference type="PDB" id="3NTI">
    <property type="method" value="X-ray"/>
    <property type="resolution" value="2.80 A"/>
    <property type="chains" value="A=2344-2515"/>
</dbReference>
<dbReference type="PDB" id="3NTK">
    <property type="method" value="X-ray"/>
    <property type="resolution" value="1.80 A"/>
    <property type="chains" value="A/B=2346-2514"/>
</dbReference>
<dbReference type="PDB" id="4Q5W">
    <property type="method" value="X-ray"/>
    <property type="resolution" value="1.80 A"/>
    <property type="chains" value="A/B=1978-2160"/>
</dbReference>
<dbReference type="PDB" id="4Q5Y">
    <property type="method" value="X-ray"/>
    <property type="resolution" value="3.00 A"/>
    <property type="chains" value="A=2164-2515"/>
</dbReference>
<dbReference type="PDBsum" id="3NTH"/>
<dbReference type="PDBsum" id="3NTI"/>
<dbReference type="PDBsum" id="3NTK"/>
<dbReference type="PDBsum" id="4Q5W"/>
<dbReference type="PDBsum" id="4Q5Y"/>
<dbReference type="SMR" id="P25823"/>
<dbReference type="BioGRID" id="63051">
    <property type="interactions" value="18"/>
</dbReference>
<dbReference type="ComplexPortal" id="CPX-3181">
    <property type="entry name" value="aubergine-tudor complex"/>
</dbReference>
<dbReference type="FunCoup" id="P25823">
    <property type="interactions" value="265"/>
</dbReference>
<dbReference type="IntAct" id="P25823">
    <property type="interactions" value="4"/>
</dbReference>
<dbReference type="MINT" id="P25823"/>
<dbReference type="STRING" id="7227.FBpp0071508"/>
<dbReference type="GlyGen" id="P25823">
    <property type="glycosylation" value="1 site"/>
</dbReference>
<dbReference type="iPTMnet" id="P25823"/>
<dbReference type="PaxDb" id="7227-FBpp0071508"/>
<dbReference type="EnsemblMetazoa" id="FBtr0071582">
    <property type="protein sequence ID" value="FBpp0071508"/>
    <property type="gene ID" value="FBgn0003891"/>
</dbReference>
<dbReference type="GeneID" id="37417"/>
<dbReference type="KEGG" id="dme:Dmel_CG9450"/>
<dbReference type="UCSC" id="CG9450-RA">
    <property type="organism name" value="d. melanogaster"/>
</dbReference>
<dbReference type="AGR" id="FB:FBgn0003891"/>
<dbReference type="CTD" id="37417"/>
<dbReference type="FlyBase" id="FBgn0003891">
    <property type="gene designation" value="tud"/>
</dbReference>
<dbReference type="VEuPathDB" id="VectorBase:FBgn0003891"/>
<dbReference type="eggNOG" id="KOG2039">
    <property type="taxonomic scope" value="Eukaryota"/>
</dbReference>
<dbReference type="GeneTree" id="ENSGT00940000171066"/>
<dbReference type="InParanoid" id="P25823"/>
<dbReference type="OMA" id="CSQYIVL"/>
<dbReference type="OrthoDB" id="9989103at2759"/>
<dbReference type="PhylomeDB" id="P25823"/>
<dbReference type="SignaLink" id="P25823"/>
<dbReference type="BioGRID-ORCS" id="37417">
    <property type="hits" value="1 hit in 3 CRISPR screens"/>
</dbReference>
<dbReference type="ChiTaRS" id="tud">
    <property type="organism name" value="fly"/>
</dbReference>
<dbReference type="EvolutionaryTrace" id="P25823"/>
<dbReference type="GenomeRNAi" id="37417"/>
<dbReference type="PRO" id="PR:P25823"/>
<dbReference type="Proteomes" id="UP000000803">
    <property type="component" value="Chromosome 2R"/>
</dbReference>
<dbReference type="Bgee" id="FBgn0003891">
    <property type="expression patterns" value="Expressed in adult tracheocyte (Drosophila) in Malpighian tubule and 261 other cell types or tissues"/>
</dbReference>
<dbReference type="ExpressionAtlas" id="P25823">
    <property type="expression patterns" value="baseline and differential"/>
</dbReference>
<dbReference type="GO" id="GO:0005737">
    <property type="term" value="C:cytoplasm"/>
    <property type="evidence" value="ECO:0000314"/>
    <property type="project" value="FlyBase"/>
</dbReference>
<dbReference type="GO" id="GO:0005829">
    <property type="term" value="C:cytosol"/>
    <property type="evidence" value="ECO:0000314"/>
    <property type="project" value="FlyBase"/>
</dbReference>
<dbReference type="GO" id="GO:0005739">
    <property type="term" value="C:mitochondrion"/>
    <property type="evidence" value="ECO:0000314"/>
    <property type="project" value="FlyBase"/>
</dbReference>
<dbReference type="GO" id="GO:0005634">
    <property type="term" value="C:nucleus"/>
    <property type="evidence" value="ECO:0000314"/>
    <property type="project" value="FlyBase"/>
</dbReference>
<dbReference type="GO" id="GO:0043186">
    <property type="term" value="C:P granule"/>
    <property type="evidence" value="ECO:0000314"/>
    <property type="project" value="UniProtKB"/>
</dbReference>
<dbReference type="GO" id="GO:0048471">
    <property type="term" value="C:perinuclear region of cytoplasm"/>
    <property type="evidence" value="ECO:0007669"/>
    <property type="project" value="UniProtKB-SubCell"/>
</dbReference>
<dbReference type="GO" id="GO:0045495">
    <property type="term" value="C:pole plasm"/>
    <property type="evidence" value="ECO:0000314"/>
    <property type="project" value="FlyBase"/>
</dbReference>
<dbReference type="GO" id="GO:0140034">
    <property type="term" value="F:methylation-dependent protein binding"/>
    <property type="evidence" value="ECO:0000353"/>
    <property type="project" value="FlyBase"/>
</dbReference>
<dbReference type="GO" id="GO:0007281">
    <property type="term" value="P:germ cell development"/>
    <property type="evidence" value="ECO:0000315"/>
    <property type="project" value="FlyBase"/>
</dbReference>
<dbReference type="GO" id="GO:0008298">
    <property type="term" value="P:intracellular mRNA localization"/>
    <property type="evidence" value="ECO:0000304"/>
    <property type="project" value="FlyBase"/>
</dbReference>
<dbReference type="GO" id="GO:0019093">
    <property type="term" value="P:mitochondrial RNA localization"/>
    <property type="evidence" value="ECO:0000315"/>
    <property type="project" value="FlyBase"/>
</dbReference>
<dbReference type="GO" id="GO:0048477">
    <property type="term" value="P:oogenesis"/>
    <property type="evidence" value="ECO:0000314"/>
    <property type="project" value="ComplexPortal"/>
</dbReference>
<dbReference type="GO" id="GO:1903863">
    <property type="term" value="P:P granule assembly"/>
    <property type="evidence" value="ECO:0000314"/>
    <property type="project" value="ComplexPortal"/>
</dbReference>
<dbReference type="GO" id="GO:0030719">
    <property type="term" value="P:P granule organization"/>
    <property type="evidence" value="ECO:0000315"/>
    <property type="project" value="FlyBase"/>
</dbReference>
<dbReference type="GO" id="GO:0007277">
    <property type="term" value="P:pole cell development"/>
    <property type="evidence" value="ECO:0000314"/>
    <property type="project" value="ComplexPortal"/>
</dbReference>
<dbReference type="GO" id="GO:0007279">
    <property type="term" value="P:pole cell formation"/>
    <property type="evidence" value="ECO:0000314"/>
    <property type="project" value="ComplexPortal"/>
</dbReference>
<dbReference type="GO" id="GO:0007315">
    <property type="term" value="P:pole plasm assembly"/>
    <property type="evidence" value="ECO:0000315"/>
    <property type="project" value="FlyBase"/>
</dbReference>
<dbReference type="GO" id="GO:1900370">
    <property type="term" value="P:positive regulation of post-transcriptional gene silencing by RNA"/>
    <property type="evidence" value="ECO:0000314"/>
    <property type="project" value="ComplexPortal"/>
</dbReference>
<dbReference type="GO" id="GO:0140965">
    <property type="term" value="P:secondary piRNA processing"/>
    <property type="evidence" value="ECO:0000353"/>
    <property type="project" value="FlyBase"/>
</dbReference>
<dbReference type="CDD" id="cd20379">
    <property type="entry name" value="Tudor_dTUD-like"/>
    <property type="match status" value="1"/>
</dbReference>
<dbReference type="FunFam" id="2.30.30.140:FF:000172">
    <property type="entry name" value="Maternal protein tudor"/>
    <property type="match status" value="1"/>
</dbReference>
<dbReference type="FunFam" id="2.30.30.140:FF:000018">
    <property type="entry name" value="Serine/threonine-protein kinase 31"/>
    <property type="match status" value="2"/>
</dbReference>
<dbReference type="Gene3D" id="2.30.30.140">
    <property type="match status" value="9"/>
</dbReference>
<dbReference type="Gene3D" id="2.40.50.790">
    <property type="match status" value="2"/>
</dbReference>
<dbReference type="Gene3D" id="2.40.50.90">
    <property type="match status" value="3"/>
</dbReference>
<dbReference type="InterPro" id="IPR035437">
    <property type="entry name" value="SNase_OB-fold_sf"/>
</dbReference>
<dbReference type="InterPro" id="IPR002999">
    <property type="entry name" value="Tudor"/>
</dbReference>
<dbReference type="InterPro" id="IPR050621">
    <property type="entry name" value="Tudor_domain_containing"/>
</dbReference>
<dbReference type="PANTHER" id="PTHR22948:SF76">
    <property type="entry name" value="FI20010P1-RELATED"/>
    <property type="match status" value="1"/>
</dbReference>
<dbReference type="PANTHER" id="PTHR22948">
    <property type="entry name" value="TUDOR DOMAIN CONTAINING PROTEIN"/>
    <property type="match status" value="1"/>
</dbReference>
<dbReference type="Pfam" id="PF00567">
    <property type="entry name" value="TUDOR"/>
    <property type="match status" value="9"/>
</dbReference>
<dbReference type="SMART" id="SM00333">
    <property type="entry name" value="TUDOR"/>
    <property type="match status" value="10"/>
</dbReference>
<dbReference type="SUPFAM" id="SSF63748">
    <property type="entry name" value="Tudor/PWWP/MBT"/>
    <property type="match status" value="9"/>
</dbReference>
<dbReference type="PROSITE" id="PS50304">
    <property type="entry name" value="TUDOR"/>
    <property type="match status" value="9"/>
</dbReference>
<gene>
    <name evidence="12" type="primary">tud</name>
    <name evidence="12" type="ORF">CG9450</name>
</gene>
<comment type="function">
    <text evidence="4 6">May act via the Piwi-interacting RNA (piRNA) metabolic process mediated by aub and AGO3 Piwi proteins, which mediates the repression of transposable elements during meiosis by forming complexes composed of piRNAs and Piwi proteins and governs the methylation and subsequent repression of transposons (PubMed:19959991). Required during oogenesis for the formation of primordial germ cells and for normal abdominal segmentation (PubMed:17428915). Not involved in repression of retroelements (PubMed:17428915).</text>
</comment>
<comment type="subunit">
    <text evidence="3 6 8 10">May form part of a piRNA processing complex consisting of tud, aub and AGO3 (PubMed:19959991). Interacts with AGO3 (when symmetrically dimethylated on Arg residues) and aub (when symmetrically dimethylated on Arg residues) (PubMed:19959991, PubMed:26212455). Interacts with vls (PubMed:15800004). Interacts with me31B/DDX6 (when symmetrically dimethylated on Arg residues) (PubMed:28945271).</text>
</comment>
<comment type="interaction">
    <interactant intactId="EBI-498741">
        <id>P25823</id>
    </interactant>
    <interactant intactId="EBI-3431981">
        <id>Q7PLK0</id>
        <label>AGO3</label>
    </interactant>
    <organismsDiffer>false</organismsDiffer>
    <experiments>5</experiments>
</comment>
<comment type="interaction">
    <interactant intactId="EBI-498741">
        <id>P25823</id>
    </interactant>
    <interactant intactId="EBI-98862">
        <id>O76922</id>
        <label>aub</label>
    </interactant>
    <organismsDiffer>false</organismsDiffer>
    <experiments>7</experiments>
</comment>
<comment type="subcellular location">
    <subcellularLocation>
        <location evidence="10">Cytoplasm</location>
    </subcellularLocation>
    <subcellularLocation>
        <location evidence="7 9 10">Cytoplasm</location>
        <location evidence="7 9 10">Perinuclear region</location>
    </subcellularLocation>
    <subcellularLocation>
        <location evidence="7 9 10">Cytoplasm</location>
        <location evidence="7 9 10">Cytoplasmic ribonucleoprotein granule</location>
    </subcellularLocation>
    <text evidence="7 9 10">Component of the perinuclear meiotic nuage (also known as germline granule or P granule), a germline-specific membraneless ribonucleoprotein biocondensate involved in post-transcriptional regulation of transposons and mRNAs (PubMed:22303351, PubMed:26295961, PubMed:28945271). Localization to the nuage requires aub but not AGO3 (PubMed:22303351). During late stages of oogenesis seen in the pole plasm at the posterior end of the oocyte (PubMed:28945271).</text>
</comment>
<comment type="developmental stage">
    <text evidence="7">Expressed in germline cells at late stages of spermatogenesis and throughout oogenesis (at protein level) (PubMed:22303351). Expressed throughout the life cycle.</text>
</comment>
<comment type="miscellaneous">
    <text>The TUD mRNA accumulates within the posterior region of the developing oocyte during the early to middle stages of oogenesis.</text>
</comment>
<accession>P25823</accession>
<accession>Q9W2J8</accession>
<keyword id="KW-0002">3D-structure</keyword>
<keyword id="KW-0963">Cytoplasm</keyword>
<keyword id="KW-0217">Developmental protein</keyword>
<keyword id="KW-0221">Differentiation</keyword>
<keyword id="KW-0896">Oogenesis</keyword>
<keyword id="KW-0597">Phosphoprotein</keyword>
<keyword id="KW-1185">Reference proteome</keyword>
<keyword id="KW-0677">Repeat</keyword>